<keyword id="KW-0067">ATP-binding</keyword>
<keyword id="KW-0173">Coenzyme A biosynthesis</keyword>
<keyword id="KW-0963">Cytoplasm</keyword>
<keyword id="KW-0460">Magnesium</keyword>
<keyword id="KW-0547">Nucleotide-binding</keyword>
<keyword id="KW-0548">Nucleotidyltransferase</keyword>
<keyword id="KW-1185">Reference proteome</keyword>
<keyword id="KW-0808">Transferase</keyword>
<proteinExistence type="inferred from homology"/>
<evidence type="ECO:0000255" key="1">
    <source>
        <dbReference type="HAMAP-Rule" id="MF_00151"/>
    </source>
</evidence>
<protein>
    <recommendedName>
        <fullName evidence="1">Phosphopantetheine adenylyltransferase</fullName>
        <ecNumber evidence="1">2.7.7.3</ecNumber>
    </recommendedName>
    <alternativeName>
        <fullName evidence="1">Dephospho-CoA pyrophosphorylase</fullName>
    </alternativeName>
    <alternativeName>
        <fullName evidence="1">Pantetheine-phosphate adenylyltransferase</fullName>
        <shortName evidence="1">PPAT</shortName>
    </alternativeName>
</protein>
<accession>C3MD28</accession>
<sequence length="164" mass="17456">MTTAFYPGSFDPMTNGHLDVLVQALNVASKVIVAIGIHPGKTPLFSFDERAGLIRRSLSESLPQRAGDIAVVAFDNLVVDAARQHGASLLVRGLRDGTDLDYEMQMAGMNRQMAPDIQTLFLPAGTASRPITATLVRQIAAMGGNVSAFVPGPVFQALQAKHKA</sequence>
<dbReference type="EC" id="2.7.7.3" evidence="1"/>
<dbReference type="EMBL" id="CP001389">
    <property type="protein sequence ID" value="ACP25347.1"/>
    <property type="molecule type" value="Genomic_DNA"/>
</dbReference>
<dbReference type="RefSeq" id="WP_012708119.1">
    <property type="nucleotide sequence ID" value="NC_012587.1"/>
</dbReference>
<dbReference type="RefSeq" id="YP_002826100.1">
    <property type="nucleotide sequence ID" value="NC_012587.1"/>
</dbReference>
<dbReference type="SMR" id="C3MD28"/>
<dbReference type="STRING" id="394.NGR_c15810"/>
<dbReference type="KEGG" id="rhi:NGR_c15810"/>
<dbReference type="PATRIC" id="fig|394.7.peg.4397"/>
<dbReference type="eggNOG" id="COG0669">
    <property type="taxonomic scope" value="Bacteria"/>
</dbReference>
<dbReference type="HOGENOM" id="CLU_100149_0_1_5"/>
<dbReference type="OrthoDB" id="9806661at2"/>
<dbReference type="UniPathway" id="UPA00241">
    <property type="reaction ID" value="UER00355"/>
</dbReference>
<dbReference type="Proteomes" id="UP000001054">
    <property type="component" value="Chromosome"/>
</dbReference>
<dbReference type="GO" id="GO:0005737">
    <property type="term" value="C:cytoplasm"/>
    <property type="evidence" value="ECO:0007669"/>
    <property type="project" value="UniProtKB-SubCell"/>
</dbReference>
<dbReference type="GO" id="GO:0005524">
    <property type="term" value="F:ATP binding"/>
    <property type="evidence" value="ECO:0007669"/>
    <property type="project" value="UniProtKB-KW"/>
</dbReference>
<dbReference type="GO" id="GO:0004595">
    <property type="term" value="F:pantetheine-phosphate adenylyltransferase activity"/>
    <property type="evidence" value="ECO:0007669"/>
    <property type="project" value="UniProtKB-UniRule"/>
</dbReference>
<dbReference type="GO" id="GO:0015937">
    <property type="term" value="P:coenzyme A biosynthetic process"/>
    <property type="evidence" value="ECO:0007669"/>
    <property type="project" value="UniProtKB-UniRule"/>
</dbReference>
<dbReference type="CDD" id="cd02163">
    <property type="entry name" value="PPAT"/>
    <property type="match status" value="1"/>
</dbReference>
<dbReference type="Gene3D" id="3.40.50.620">
    <property type="entry name" value="HUPs"/>
    <property type="match status" value="1"/>
</dbReference>
<dbReference type="HAMAP" id="MF_00151">
    <property type="entry name" value="PPAT_bact"/>
    <property type="match status" value="1"/>
</dbReference>
<dbReference type="InterPro" id="IPR004821">
    <property type="entry name" value="Cyt_trans-like"/>
</dbReference>
<dbReference type="InterPro" id="IPR001980">
    <property type="entry name" value="PPAT"/>
</dbReference>
<dbReference type="InterPro" id="IPR014729">
    <property type="entry name" value="Rossmann-like_a/b/a_fold"/>
</dbReference>
<dbReference type="NCBIfam" id="TIGR01510">
    <property type="entry name" value="coaD_prev_kdtB"/>
    <property type="match status" value="1"/>
</dbReference>
<dbReference type="NCBIfam" id="TIGR00125">
    <property type="entry name" value="cyt_tran_rel"/>
    <property type="match status" value="1"/>
</dbReference>
<dbReference type="PANTHER" id="PTHR21342">
    <property type="entry name" value="PHOSPHOPANTETHEINE ADENYLYLTRANSFERASE"/>
    <property type="match status" value="1"/>
</dbReference>
<dbReference type="PANTHER" id="PTHR21342:SF1">
    <property type="entry name" value="PHOSPHOPANTETHEINE ADENYLYLTRANSFERASE"/>
    <property type="match status" value="1"/>
</dbReference>
<dbReference type="Pfam" id="PF01467">
    <property type="entry name" value="CTP_transf_like"/>
    <property type="match status" value="1"/>
</dbReference>
<dbReference type="PRINTS" id="PR01020">
    <property type="entry name" value="LPSBIOSNTHSS"/>
</dbReference>
<dbReference type="SUPFAM" id="SSF52374">
    <property type="entry name" value="Nucleotidylyl transferase"/>
    <property type="match status" value="1"/>
</dbReference>
<organism>
    <name type="scientific">Sinorhizobium fredii (strain NBRC 101917 / NGR234)</name>
    <dbReference type="NCBI Taxonomy" id="394"/>
    <lineage>
        <taxon>Bacteria</taxon>
        <taxon>Pseudomonadati</taxon>
        <taxon>Pseudomonadota</taxon>
        <taxon>Alphaproteobacteria</taxon>
        <taxon>Hyphomicrobiales</taxon>
        <taxon>Rhizobiaceae</taxon>
        <taxon>Sinorhizobium/Ensifer group</taxon>
        <taxon>Sinorhizobium</taxon>
    </lineage>
</organism>
<feature type="chain" id="PRO_1000123296" description="Phosphopantetheine adenylyltransferase">
    <location>
        <begin position="1"/>
        <end position="164"/>
    </location>
</feature>
<feature type="binding site" evidence="1">
    <location>
        <begin position="9"/>
        <end position="10"/>
    </location>
    <ligand>
        <name>ATP</name>
        <dbReference type="ChEBI" id="CHEBI:30616"/>
    </ligand>
</feature>
<feature type="binding site" evidence="1">
    <location>
        <position position="9"/>
    </location>
    <ligand>
        <name>substrate</name>
    </ligand>
</feature>
<feature type="binding site" evidence="1">
    <location>
        <position position="17"/>
    </location>
    <ligand>
        <name>ATP</name>
        <dbReference type="ChEBI" id="CHEBI:30616"/>
    </ligand>
</feature>
<feature type="binding site" evidence="1">
    <location>
        <position position="41"/>
    </location>
    <ligand>
        <name>substrate</name>
    </ligand>
</feature>
<feature type="binding site" evidence="1">
    <location>
        <position position="78"/>
    </location>
    <ligand>
        <name>substrate</name>
    </ligand>
</feature>
<feature type="binding site" evidence="1">
    <location>
        <position position="92"/>
    </location>
    <ligand>
        <name>substrate</name>
    </ligand>
</feature>
<feature type="binding site" evidence="1">
    <location>
        <begin position="93"/>
        <end position="95"/>
    </location>
    <ligand>
        <name>ATP</name>
        <dbReference type="ChEBI" id="CHEBI:30616"/>
    </ligand>
</feature>
<feature type="binding site" evidence="1">
    <location>
        <position position="103"/>
    </location>
    <ligand>
        <name>ATP</name>
        <dbReference type="ChEBI" id="CHEBI:30616"/>
    </ligand>
</feature>
<feature type="binding site" evidence="1">
    <location>
        <begin position="128"/>
        <end position="134"/>
    </location>
    <ligand>
        <name>ATP</name>
        <dbReference type="ChEBI" id="CHEBI:30616"/>
    </ligand>
</feature>
<feature type="site" description="Transition state stabilizer" evidence="1">
    <location>
        <position position="17"/>
    </location>
</feature>
<comment type="function">
    <text evidence="1">Reversibly transfers an adenylyl group from ATP to 4'-phosphopantetheine, yielding dephospho-CoA (dPCoA) and pyrophosphate.</text>
</comment>
<comment type="catalytic activity">
    <reaction evidence="1">
        <text>(R)-4'-phosphopantetheine + ATP + H(+) = 3'-dephospho-CoA + diphosphate</text>
        <dbReference type="Rhea" id="RHEA:19801"/>
        <dbReference type="ChEBI" id="CHEBI:15378"/>
        <dbReference type="ChEBI" id="CHEBI:30616"/>
        <dbReference type="ChEBI" id="CHEBI:33019"/>
        <dbReference type="ChEBI" id="CHEBI:57328"/>
        <dbReference type="ChEBI" id="CHEBI:61723"/>
        <dbReference type="EC" id="2.7.7.3"/>
    </reaction>
</comment>
<comment type="cofactor">
    <cofactor evidence="1">
        <name>Mg(2+)</name>
        <dbReference type="ChEBI" id="CHEBI:18420"/>
    </cofactor>
</comment>
<comment type="pathway">
    <text evidence="1">Cofactor biosynthesis; coenzyme A biosynthesis; CoA from (R)-pantothenate: step 4/5.</text>
</comment>
<comment type="subunit">
    <text evidence="1">Homohexamer.</text>
</comment>
<comment type="subcellular location">
    <subcellularLocation>
        <location evidence="1">Cytoplasm</location>
    </subcellularLocation>
</comment>
<comment type="similarity">
    <text evidence="1">Belongs to the bacterial CoaD family.</text>
</comment>
<gene>
    <name evidence="1" type="primary">coaD</name>
    <name type="ordered locus">NGR_c15810</name>
</gene>
<name>COAD_SINFN</name>
<reference key="1">
    <citation type="journal article" date="2009" name="Appl. Environ. Microbiol.">
        <title>Rhizobium sp. strain NGR234 possesses a remarkable number of secretion systems.</title>
        <authorList>
            <person name="Schmeisser C."/>
            <person name="Liesegang H."/>
            <person name="Krysciak D."/>
            <person name="Bakkou N."/>
            <person name="Le Quere A."/>
            <person name="Wollherr A."/>
            <person name="Heinemeyer I."/>
            <person name="Morgenstern B."/>
            <person name="Pommerening-Roeser A."/>
            <person name="Flores M."/>
            <person name="Palacios R."/>
            <person name="Brenner S."/>
            <person name="Gottschalk G."/>
            <person name="Schmitz R.A."/>
            <person name="Broughton W.J."/>
            <person name="Perret X."/>
            <person name="Strittmatter A.W."/>
            <person name="Streit W.R."/>
        </authorList>
    </citation>
    <scope>NUCLEOTIDE SEQUENCE [LARGE SCALE GENOMIC DNA]</scope>
    <source>
        <strain>NBRC 101917 / NGR234</strain>
    </source>
</reference>